<reference key="1">
    <citation type="journal article" date="2001" name="Proc. Natl. Acad. Sci. U.S.A.">
        <title>Complete genomic sequence of Pasteurella multocida Pm70.</title>
        <authorList>
            <person name="May B.J."/>
            <person name="Zhang Q."/>
            <person name="Li L.L."/>
            <person name="Paustian M.L."/>
            <person name="Whittam T.S."/>
            <person name="Kapur V."/>
        </authorList>
    </citation>
    <scope>NUCLEOTIDE SEQUENCE [LARGE SCALE GENOMIC DNA]</scope>
    <source>
        <strain>Pm70</strain>
    </source>
</reference>
<keyword id="KW-0067">ATP-binding</keyword>
<keyword id="KW-0997">Cell inner membrane</keyword>
<keyword id="KW-1003">Cell membrane</keyword>
<keyword id="KW-0406">Ion transport</keyword>
<keyword id="KW-0472">Membrane</keyword>
<keyword id="KW-0547">Nucleotide-binding</keyword>
<keyword id="KW-1185">Reference proteome</keyword>
<keyword id="KW-1278">Translocase</keyword>
<keyword id="KW-0813">Transport</keyword>
<keyword id="KW-0862">Zinc</keyword>
<keyword id="KW-0864">Zinc transport</keyword>
<comment type="function">
    <text evidence="1">Part of the ABC transporter complex ZnuABC involved in zinc import. Responsible for energy coupling to the transport system.</text>
</comment>
<comment type="catalytic activity">
    <reaction evidence="1">
        <text>Zn(2+)(out) + ATP(in) + H2O(in) = Zn(2+)(in) + ADP(in) + phosphate(in) + H(+)(in)</text>
        <dbReference type="Rhea" id="RHEA:29795"/>
        <dbReference type="ChEBI" id="CHEBI:15377"/>
        <dbReference type="ChEBI" id="CHEBI:15378"/>
        <dbReference type="ChEBI" id="CHEBI:29105"/>
        <dbReference type="ChEBI" id="CHEBI:30616"/>
        <dbReference type="ChEBI" id="CHEBI:43474"/>
        <dbReference type="ChEBI" id="CHEBI:456216"/>
        <dbReference type="EC" id="7.2.2.20"/>
    </reaction>
</comment>
<comment type="subunit">
    <text evidence="1">The complex is composed of two ATP-binding proteins (ZnuC), two transmembrane proteins (ZnuB) and a solute-binding protein (ZnuA).</text>
</comment>
<comment type="subcellular location">
    <subcellularLocation>
        <location evidence="1">Cell inner membrane</location>
        <topology evidence="1">Peripheral membrane protein</topology>
    </subcellularLocation>
</comment>
<comment type="similarity">
    <text evidence="1">Belongs to the ABC transporter superfamily. Zinc importer (TC 3.A.1.15.5) family.</text>
</comment>
<protein>
    <recommendedName>
        <fullName evidence="1">Zinc import ATP-binding protein ZnuC</fullName>
        <ecNumber evidence="1">7.2.2.20</ecNumber>
    </recommendedName>
</protein>
<proteinExistence type="inferred from homology"/>
<organism>
    <name type="scientific">Pasteurella multocida (strain Pm70)</name>
    <dbReference type="NCBI Taxonomy" id="272843"/>
    <lineage>
        <taxon>Bacteria</taxon>
        <taxon>Pseudomonadati</taxon>
        <taxon>Pseudomonadota</taxon>
        <taxon>Gammaproteobacteria</taxon>
        <taxon>Pasteurellales</taxon>
        <taxon>Pasteurellaceae</taxon>
        <taxon>Pasteurella</taxon>
    </lineage>
</organism>
<accession>Q9CP24</accession>
<gene>
    <name evidence="1" type="primary">znuC</name>
    <name type="ordered locus">PM0242</name>
</gene>
<feature type="chain" id="PRO_0000281521" description="Zinc import ATP-binding protein ZnuC">
    <location>
        <begin position="1"/>
        <end position="263"/>
    </location>
</feature>
<feature type="domain" description="ABC transporter" evidence="1">
    <location>
        <begin position="11"/>
        <end position="226"/>
    </location>
</feature>
<feature type="binding site" evidence="1">
    <location>
        <begin position="43"/>
        <end position="50"/>
    </location>
    <ligand>
        <name>ATP</name>
        <dbReference type="ChEBI" id="CHEBI:30616"/>
    </ligand>
</feature>
<dbReference type="EC" id="7.2.2.20" evidence="1"/>
<dbReference type="EMBL" id="AE004439">
    <property type="protein sequence ID" value="AAK02326.1"/>
    <property type="molecule type" value="Genomic_DNA"/>
</dbReference>
<dbReference type="RefSeq" id="WP_010906540.1">
    <property type="nucleotide sequence ID" value="NC_002663.1"/>
</dbReference>
<dbReference type="SMR" id="Q9CP24"/>
<dbReference type="STRING" id="272843.PM0242"/>
<dbReference type="EnsemblBacteria" id="AAK02326">
    <property type="protein sequence ID" value="AAK02326"/>
    <property type="gene ID" value="PM0242"/>
</dbReference>
<dbReference type="KEGG" id="pmu:PM0242"/>
<dbReference type="HOGENOM" id="CLU_000604_1_11_6"/>
<dbReference type="OrthoDB" id="9780942at2"/>
<dbReference type="Proteomes" id="UP000000809">
    <property type="component" value="Chromosome"/>
</dbReference>
<dbReference type="GO" id="GO:0005886">
    <property type="term" value="C:plasma membrane"/>
    <property type="evidence" value="ECO:0007669"/>
    <property type="project" value="UniProtKB-SubCell"/>
</dbReference>
<dbReference type="GO" id="GO:0015633">
    <property type="term" value="F:ABC-type zinc transporter activity"/>
    <property type="evidence" value="ECO:0007669"/>
    <property type="project" value="UniProtKB-EC"/>
</dbReference>
<dbReference type="GO" id="GO:0005524">
    <property type="term" value="F:ATP binding"/>
    <property type="evidence" value="ECO:0007669"/>
    <property type="project" value="UniProtKB-KW"/>
</dbReference>
<dbReference type="GO" id="GO:0016887">
    <property type="term" value="F:ATP hydrolysis activity"/>
    <property type="evidence" value="ECO:0007669"/>
    <property type="project" value="InterPro"/>
</dbReference>
<dbReference type="GO" id="GO:0010043">
    <property type="term" value="P:response to zinc ion"/>
    <property type="evidence" value="ECO:0007669"/>
    <property type="project" value="TreeGrafter"/>
</dbReference>
<dbReference type="FunFam" id="3.40.50.300:FF:000392">
    <property type="entry name" value="Zinc import ATP-binding protein ZnuC"/>
    <property type="match status" value="1"/>
</dbReference>
<dbReference type="Gene3D" id="3.40.50.300">
    <property type="entry name" value="P-loop containing nucleotide triphosphate hydrolases"/>
    <property type="match status" value="1"/>
</dbReference>
<dbReference type="InterPro" id="IPR003593">
    <property type="entry name" value="AAA+_ATPase"/>
</dbReference>
<dbReference type="InterPro" id="IPR003439">
    <property type="entry name" value="ABC_transporter-like_ATP-bd"/>
</dbReference>
<dbReference type="InterPro" id="IPR017871">
    <property type="entry name" value="ABC_transporter-like_CS"/>
</dbReference>
<dbReference type="InterPro" id="IPR050153">
    <property type="entry name" value="Metal_Ion_Import_ABC"/>
</dbReference>
<dbReference type="InterPro" id="IPR027417">
    <property type="entry name" value="P-loop_NTPase"/>
</dbReference>
<dbReference type="NCBIfam" id="NF007090">
    <property type="entry name" value="PRK09544.1"/>
    <property type="match status" value="1"/>
</dbReference>
<dbReference type="PANTHER" id="PTHR42734">
    <property type="entry name" value="METAL TRANSPORT SYSTEM ATP-BINDING PROTEIN TM_0124-RELATED"/>
    <property type="match status" value="1"/>
</dbReference>
<dbReference type="PANTHER" id="PTHR42734:SF9">
    <property type="entry name" value="ZINC IMPORT ATP-BINDING PROTEIN ZNUC"/>
    <property type="match status" value="1"/>
</dbReference>
<dbReference type="Pfam" id="PF00005">
    <property type="entry name" value="ABC_tran"/>
    <property type="match status" value="1"/>
</dbReference>
<dbReference type="SMART" id="SM00382">
    <property type="entry name" value="AAA"/>
    <property type="match status" value="1"/>
</dbReference>
<dbReference type="SUPFAM" id="SSF52540">
    <property type="entry name" value="P-loop containing nucleoside triphosphate hydrolases"/>
    <property type="match status" value="1"/>
</dbReference>
<dbReference type="PROSITE" id="PS00211">
    <property type="entry name" value="ABC_TRANSPORTER_1"/>
    <property type="match status" value="1"/>
</dbReference>
<dbReference type="PROSITE" id="PS50893">
    <property type="entry name" value="ABC_TRANSPORTER_2"/>
    <property type="match status" value="1"/>
</dbReference>
<dbReference type="PROSITE" id="PS51298">
    <property type="entry name" value="ZNUC"/>
    <property type="match status" value="1"/>
</dbReference>
<evidence type="ECO:0000255" key="1">
    <source>
        <dbReference type="HAMAP-Rule" id="MF_01725"/>
    </source>
</evidence>
<sequence length="263" mass="29399">MHIHSIKLPLVELKNINVVFEQKKALQNINLTLYPNSIITIVGPNGGGKSTLLKVLLKLLPPTSGQVIYHKNLRIGYVPQKIHLDHSLPITVERFLSLKKGISRQAIQDALSLLSISHLHKNSLQKLSGGEMQRVLLARAILNKPNLLVLDEPTQGVDINGQAELYQLIQQTQQQLNCAILMVSHDLNIVMADTNEVLCINQHICCAGTPETVSNDPTFIHFFGDQFAKNVALYTHKHNHKHDIHGDICCTSDFQSQQCTHKE</sequence>
<name>ZNUC_PASMU</name>